<evidence type="ECO:0000305" key="1"/>
<accession>P68652</accession>
<accession>Q9XJQ1</accession>
<name>NINB_BPP21</name>
<protein>
    <recommendedName>
        <fullName>Protein ninB</fullName>
    </recommendedName>
</protein>
<organism>
    <name type="scientific">Enterobacteria phage P21</name>
    <name type="common">Bacteriophage 21</name>
    <name type="synonym">Bacteriophage P21</name>
    <dbReference type="NCBI Taxonomy" id="10711"/>
    <lineage>
        <taxon>Viruses</taxon>
        <taxon>Duplodnaviria</taxon>
        <taxon>Heunggongvirae</taxon>
        <taxon>Uroviricota</taxon>
        <taxon>Caudoviricetes</taxon>
        <taxon>Lambdavirus</taxon>
        <taxon>Lambdavirus lambda</taxon>
    </lineage>
</organism>
<feature type="chain" id="PRO_0000077609" description="Protein ninB">
    <location>
        <begin position="1"/>
        <end position="146"/>
    </location>
</feature>
<proteinExistence type="inferred from homology"/>
<dbReference type="EMBL" id="AJ237660">
    <property type="protein sequence ID" value="CAB39988.1"/>
    <property type="molecule type" value="Genomic_DNA"/>
</dbReference>
<dbReference type="SMR" id="P68652"/>
<dbReference type="Gene3D" id="1.10.3790.10">
    <property type="entry name" value="NinB"/>
    <property type="match status" value="1"/>
</dbReference>
<dbReference type="InterPro" id="IPR036619">
    <property type="entry name" value="NinB_sf"/>
</dbReference>
<dbReference type="InterPro" id="IPR008711">
    <property type="entry name" value="Recombinase_NinB"/>
</dbReference>
<dbReference type="Pfam" id="PF05772">
    <property type="entry name" value="NinB"/>
    <property type="match status" value="1"/>
</dbReference>
<dbReference type="SUPFAM" id="SSF103370">
    <property type="entry name" value="NinB"/>
    <property type="match status" value="1"/>
</dbReference>
<comment type="similarity">
    <text evidence="1">Belongs to the ninB family.</text>
</comment>
<gene>
    <name type="primary">ninB</name>
</gene>
<sequence length="146" mass="16678">MKKLTFEIRSPAHQQNAIHAVQQILPDPTKPIVVTIQERNRSLDQNRKLWACLGDVSRQVEWHGRWLDAESWKCVFTAALKQQDVVPNLAGNGFVVIGQSTSRMRVSEFAELLELIQAFGTERGVKWSDEARLALEWKARWGDRAA</sequence>
<organismHost>
    <name type="scientific">Escherichia coli</name>
    <dbReference type="NCBI Taxonomy" id="562"/>
</organismHost>
<reference key="1">
    <citation type="submission" date="1999-03" db="EMBL/GenBank/DDBJ databases">
        <authorList>
            <person name="Kroeger M."/>
            <person name="Hobom G."/>
        </authorList>
    </citation>
    <scope>NUCLEOTIDE SEQUENCE [GENOMIC DNA]</scope>
</reference>